<proteinExistence type="inferred from homology"/>
<name>MRAZ_CLOTE</name>
<comment type="subunit">
    <text evidence="1">Forms oligomers.</text>
</comment>
<comment type="subcellular location">
    <subcellularLocation>
        <location evidence="1">Cytoplasm</location>
        <location evidence="1">Nucleoid</location>
    </subcellularLocation>
</comment>
<comment type="similarity">
    <text evidence="1">Belongs to the MraZ family.</text>
</comment>
<accession>Q894B3</accession>
<evidence type="ECO:0000255" key="1">
    <source>
        <dbReference type="HAMAP-Rule" id="MF_01008"/>
    </source>
</evidence>
<evidence type="ECO:0000255" key="2">
    <source>
        <dbReference type="PROSITE-ProRule" id="PRU01076"/>
    </source>
</evidence>
<gene>
    <name evidence="1" type="primary">mraZ</name>
    <name type="ordered locus">CTC_01636</name>
</gene>
<protein>
    <recommendedName>
        <fullName>Transcriptional regulator MraZ</fullName>
    </recommendedName>
</protein>
<sequence>MFIGEYNHGVDSKNRIIIPSKFREELGESFILTKGLDNCLYIYPMEEWRILEEKLKKLPLTNKDARAFVRFFFSGANEISIDKQGRALIPQNLMKYANINKDIVSIGVATRIEIWSREKWEEYNDANIDYEQIAEKMSELGI</sequence>
<feature type="chain" id="PRO_0000108471" description="Transcriptional regulator MraZ">
    <location>
        <begin position="1"/>
        <end position="142"/>
    </location>
</feature>
<feature type="domain" description="SpoVT-AbrB 1" evidence="2">
    <location>
        <begin position="5"/>
        <end position="47"/>
    </location>
</feature>
<feature type="domain" description="SpoVT-AbrB 2" evidence="2">
    <location>
        <begin position="76"/>
        <end position="119"/>
    </location>
</feature>
<organism>
    <name type="scientific">Clostridium tetani (strain Massachusetts / E88)</name>
    <dbReference type="NCBI Taxonomy" id="212717"/>
    <lineage>
        <taxon>Bacteria</taxon>
        <taxon>Bacillati</taxon>
        <taxon>Bacillota</taxon>
        <taxon>Clostridia</taxon>
        <taxon>Eubacteriales</taxon>
        <taxon>Clostridiaceae</taxon>
        <taxon>Clostridium</taxon>
    </lineage>
</organism>
<dbReference type="EMBL" id="AE015927">
    <property type="protein sequence ID" value="AAO36179.1"/>
    <property type="molecule type" value="Genomic_DNA"/>
</dbReference>
<dbReference type="RefSeq" id="WP_011099839.1">
    <property type="nucleotide sequence ID" value="NC_004557.1"/>
</dbReference>
<dbReference type="SMR" id="Q894B3"/>
<dbReference type="STRING" id="212717.CTC_01636"/>
<dbReference type="GeneID" id="24253933"/>
<dbReference type="KEGG" id="ctc:CTC_01636"/>
<dbReference type="HOGENOM" id="CLU_107907_0_5_9"/>
<dbReference type="OrthoDB" id="9807753at2"/>
<dbReference type="Proteomes" id="UP000001412">
    <property type="component" value="Chromosome"/>
</dbReference>
<dbReference type="GO" id="GO:0005737">
    <property type="term" value="C:cytoplasm"/>
    <property type="evidence" value="ECO:0007669"/>
    <property type="project" value="UniProtKB-UniRule"/>
</dbReference>
<dbReference type="GO" id="GO:0009295">
    <property type="term" value="C:nucleoid"/>
    <property type="evidence" value="ECO:0007669"/>
    <property type="project" value="UniProtKB-SubCell"/>
</dbReference>
<dbReference type="GO" id="GO:0003700">
    <property type="term" value="F:DNA-binding transcription factor activity"/>
    <property type="evidence" value="ECO:0007669"/>
    <property type="project" value="UniProtKB-UniRule"/>
</dbReference>
<dbReference type="GO" id="GO:0000976">
    <property type="term" value="F:transcription cis-regulatory region binding"/>
    <property type="evidence" value="ECO:0007669"/>
    <property type="project" value="TreeGrafter"/>
</dbReference>
<dbReference type="GO" id="GO:2000143">
    <property type="term" value="P:negative regulation of DNA-templated transcription initiation"/>
    <property type="evidence" value="ECO:0007669"/>
    <property type="project" value="TreeGrafter"/>
</dbReference>
<dbReference type="CDD" id="cd16321">
    <property type="entry name" value="MraZ_C"/>
    <property type="match status" value="1"/>
</dbReference>
<dbReference type="CDD" id="cd16320">
    <property type="entry name" value="MraZ_N"/>
    <property type="match status" value="1"/>
</dbReference>
<dbReference type="FunFam" id="3.40.1550.20:FF:000002">
    <property type="entry name" value="Transcriptional regulator MraZ"/>
    <property type="match status" value="1"/>
</dbReference>
<dbReference type="Gene3D" id="3.40.1550.20">
    <property type="entry name" value="Transcriptional regulator MraZ domain"/>
    <property type="match status" value="1"/>
</dbReference>
<dbReference type="HAMAP" id="MF_01008">
    <property type="entry name" value="MraZ"/>
    <property type="match status" value="1"/>
</dbReference>
<dbReference type="InterPro" id="IPR003444">
    <property type="entry name" value="MraZ"/>
</dbReference>
<dbReference type="InterPro" id="IPR035644">
    <property type="entry name" value="MraZ_C"/>
</dbReference>
<dbReference type="InterPro" id="IPR020603">
    <property type="entry name" value="MraZ_dom"/>
</dbReference>
<dbReference type="InterPro" id="IPR035642">
    <property type="entry name" value="MraZ_N"/>
</dbReference>
<dbReference type="InterPro" id="IPR038619">
    <property type="entry name" value="MraZ_sf"/>
</dbReference>
<dbReference type="InterPro" id="IPR007159">
    <property type="entry name" value="SpoVT-AbrB_dom"/>
</dbReference>
<dbReference type="InterPro" id="IPR037914">
    <property type="entry name" value="SpoVT-AbrB_sf"/>
</dbReference>
<dbReference type="NCBIfam" id="TIGR00242">
    <property type="entry name" value="division/cell wall cluster transcriptional repressor MraZ"/>
    <property type="match status" value="1"/>
</dbReference>
<dbReference type="PANTHER" id="PTHR34701">
    <property type="entry name" value="TRANSCRIPTIONAL REGULATOR MRAZ"/>
    <property type="match status" value="1"/>
</dbReference>
<dbReference type="PANTHER" id="PTHR34701:SF1">
    <property type="entry name" value="TRANSCRIPTIONAL REGULATOR MRAZ"/>
    <property type="match status" value="1"/>
</dbReference>
<dbReference type="Pfam" id="PF02381">
    <property type="entry name" value="MraZ"/>
    <property type="match status" value="2"/>
</dbReference>
<dbReference type="SUPFAM" id="SSF89447">
    <property type="entry name" value="AbrB/MazE/MraZ-like"/>
    <property type="match status" value="1"/>
</dbReference>
<dbReference type="PROSITE" id="PS51740">
    <property type="entry name" value="SPOVT_ABRB"/>
    <property type="match status" value="2"/>
</dbReference>
<reference key="1">
    <citation type="journal article" date="2003" name="Proc. Natl. Acad. Sci. U.S.A.">
        <title>The genome sequence of Clostridium tetani, the causative agent of tetanus disease.</title>
        <authorList>
            <person name="Brueggemann H."/>
            <person name="Baeumer S."/>
            <person name="Fricke W.F."/>
            <person name="Wiezer A."/>
            <person name="Liesegang H."/>
            <person name="Decker I."/>
            <person name="Herzberg C."/>
            <person name="Martinez-Arias R."/>
            <person name="Merkl R."/>
            <person name="Henne A."/>
            <person name="Gottschalk G."/>
        </authorList>
    </citation>
    <scope>NUCLEOTIDE SEQUENCE [LARGE SCALE GENOMIC DNA]</scope>
    <source>
        <strain>Massachusetts / E88</strain>
    </source>
</reference>
<keyword id="KW-0963">Cytoplasm</keyword>
<keyword id="KW-0238">DNA-binding</keyword>
<keyword id="KW-1185">Reference proteome</keyword>
<keyword id="KW-0677">Repeat</keyword>
<keyword id="KW-0804">Transcription</keyword>
<keyword id="KW-0805">Transcription regulation</keyword>